<feature type="chain" id="PRO_0000272828" description="Large ribosomal subunit protein uL23">
    <location>
        <begin position="1"/>
        <end position="98"/>
    </location>
</feature>
<organism>
    <name type="scientific">Rickettsia bellii (strain RML369-C)</name>
    <dbReference type="NCBI Taxonomy" id="336407"/>
    <lineage>
        <taxon>Bacteria</taxon>
        <taxon>Pseudomonadati</taxon>
        <taxon>Pseudomonadota</taxon>
        <taxon>Alphaproteobacteria</taxon>
        <taxon>Rickettsiales</taxon>
        <taxon>Rickettsiaceae</taxon>
        <taxon>Rickettsieae</taxon>
        <taxon>Rickettsia</taxon>
        <taxon>belli group</taxon>
    </lineage>
</organism>
<proteinExistence type="inferred from homology"/>
<protein>
    <recommendedName>
        <fullName evidence="1">Large ribosomal subunit protein uL23</fullName>
    </recommendedName>
    <alternativeName>
        <fullName evidence="2">50S ribosomal protein L23</fullName>
    </alternativeName>
</protein>
<evidence type="ECO:0000255" key="1">
    <source>
        <dbReference type="HAMAP-Rule" id="MF_01369"/>
    </source>
</evidence>
<evidence type="ECO:0000305" key="2"/>
<reference key="1">
    <citation type="journal article" date="2006" name="PLoS Genet.">
        <title>Genome sequence of Rickettsia bellii illuminates the role of amoebae in gene exchanges between intracellular pathogens.</title>
        <authorList>
            <person name="Ogata H."/>
            <person name="La Scola B."/>
            <person name="Audic S."/>
            <person name="Renesto P."/>
            <person name="Blanc G."/>
            <person name="Robert C."/>
            <person name="Fournier P.-E."/>
            <person name="Claverie J.-M."/>
            <person name="Raoult D."/>
        </authorList>
    </citation>
    <scope>NUCLEOTIDE SEQUENCE [LARGE SCALE GENOMIC DNA]</scope>
    <source>
        <strain>RML369-C</strain>
    </source>
</reference>
<dbReference type="EMBL" id="CP000087">
    <property type="protein sequence ID" value="ABE05141.1"/>
    <property type="molecule type" value="Genomic_DNA"/>
</dbReference>
<dbReference type="RefSeq" id="WP_011477719.1">
    <property type="nucleotide sequence ID" value="NC_007940.1"/>
</dbReference>
<dbReference type="SMR" id="Q1RHM3"/>
<dbReference type="KEGG" id="rbe:RBE_1060"/>
<dbReference type="eggNOG" id="COG0089">
    <property type="taxonomic scope" value="Bacteria"/>
</dbReference>
<dbReference type="HOGENOM" id="CLU_037562_3_2_5"/>
<dbReference type="OrthoDB" id="9793353at2"/>
<dbReference type="Proteomes" id="UP000001951">
    <property type="component" value="Chromosome"/>
</dbReference>
<dbReference type="GO" id="GO:1990904">
    <property type="term" value="C:ribonucleoprotein complex"/>
    <property type="evidence" value="ECO:0007669"/>
    <property type="project" value="UniProtKB-KW"/>
</dbReference>
<dbReference type="GO" id="GO:0005840">
    <property type="term" value="C:ribosome"/>
    <property type="evidence" value="ECO:0007669"/>
    <property type="project" value="UniProtKB-KW"/>
</dbReference>
<dbReference type="GO" id="GO:0019843">
    <property type="term" value="F:rRNA binding"/>
    <property type="evidence" value="ECO:0007669"/>
    <property type="project" value="UniProtKB-UniRule"/>
</dbReference>
<dbReference type="GO" id="GO:0003735">
    <property type="term" value="F:structural constituent of ribosome"/>
    <property type="evidence" value="ECO:0007669"/>
    <property type="project" value="InterPro"/>
</dbReference>
<dbReference type="GO" id="GO:0006412">
    <property type="term" value="P:translation"/>
    <property type="evidence" value="ECO:0007669"/>
    <property type="project" value="UniProtKB-UniRule"/>
</dbReference>
<dbReference type="FunFam" id="3.30.70.330:FF:000001">
    <property type="entry name" value="50S ribosomal protein L23"/>
    <property type="match status" value="1"/>
</dbReference>
<dbReference type="Gene3D" id="3.30.70.330">
    <property type="match status" value="1"/>
</dbReference>
<dbReference type="HAMAP" id="MF_01369_B">
    <property type="entry name" value="Ribosomal_uL23_B"/>
    <property type="match status" value="1"/>
</dbReference>
<dbReference type="InterPro" id="IPR012677">
    <property type="entry name" value="Nucleotide-bd_a/b_plait_sf"/>
</dbReference>
<dbReference type="InterPro" id="IPR013025">
    <property type="entry name" value="Ribosomal_uL23-like"/>
</dbReference>
<dbReference type="InterPro" id="IPR012678">
    <property type="entry name" value="Ribosomal_uL23/eL15/eS24_sf"/>
</dbReference>
<dbReference type="NCBIfam" id="NF004359">
    <property type="entry name" value="PRK05738.1-3"/>
    <property type="match status" value="1"/>
</dbReference>
<dbReference type="NCBIfam" id="NF004363">
    <property type="entry name" value="PRK05738.2-4"/>
    <property type="match status" value="1"/>
</dbReference>
<dbReference type="PANTHER" id="PTHR11620">
    <property type="entry name" value="60S RIBOSOMAL PROTEIN L23A"/>
    <property type="match status" value="1"/>
</dbReference>
<dbReference type="Pfam" id="PF00276">
    <property type="entry name" value="Ribosomal_L23"/>
    <property type="match status" value="1"/>
</dbReference>
<dbReference type="SUPFAM" id="SSF54189">
    <property type="entry name" value="Ribosomal proteins S24e, L23 and L15e"/>
    <property type="match status" value="1"/>
</dbReference>
<keyword id="KW-0687">Ribonucleoprotein</keyword>
<keyword id="KW-0689">Ribosomal protein</keyword>
<keyword id="KW-0694">RNA-binding</keyword>
<keyword id="KW-0699">rRNA-binding</keyword>
<accession>Q1RHM3</accession>
<sequence>MSSYKYYDLIRRPVITEKTTLLSEQNKYTFYVDKLAEKLAVKKAIEEIFKVKVKKVNILNVKGKKKRFKGVIGRQVDRKKAVVTLEKDHNIDFAGGIK</sequence>
<gene>
    <name evidence="1" type="primary">rplW</name>
    <name type="ordered locus">RBE_1060</name>
</gene>
<comment type="function">
    <text evidence="1">One of the early assembly proteins it binds 23S rRNA. One of the proteins that surrounds the polypeptide exit tunnel on the outside of the ribosome. Forms the main docking site for trigger factor binding to the ribosome.</text>
</comment>
<comment type="subunit">
    <text evidence="1">Part of the 50S ribosomal subunit. Contacts protein L29, and trigger factor when it is bound to the ribosome.</text>
</comment>
<comment type="similarity">
    <text evidence="1">Belongs to the universal ribosomal protein uL23 family.</text>
</comment>
<name>RL23_RICBR</name>